<accession>B7IIT9</accession>
<gene>
    <name evidence="1" type="primary">nadA</name>
    <name type="ordered locus">BCG9842_B0689</name>
</gene>
<evidence type="ECO:0000255" key="1">
    <source>
        <dbReference type="HAMAP-Rule" id="MF_00569"/>
    </source>
</evidence>
<comment type="function">
    <text evidence="1">Catalyzes the condensation of iminoaspartate with dihydroxyacetone phosphate to form quinolinate.</text>
</comment>
<comment type="catalytic activity">
    <reaction evidence="1">
        <text>iminosuccinate + dihydroxyacetone phosphate = quinolinate + phosphate + 2 H2O + H(+)</text>
        <dbReference type="Rhea" id="RHEA:25888"/>
        <dbReference type="ChEBI" id="CHEBI:15377"/>
        <dbReference type="ChEBI" id="CHEBI:15378"/>
        <dbReference type="ChEBI" id="CHEBI:29959"/>
        <dbReference type="ChEBI" id="CHEBI:43474"/>
        <dbReference type="ChEBI" id="CHEBI:57642"/>
        <dbReference type="ChEBI" id="CHEBI:77875"/>
        <dbReference type="EC" id="2.5.1.72"/>
    </reaction>
    <physiologicalReaction direction="left-to-right" evidence="1">
        <dbReference type="Rhea" id="RHEA:25889"/>
    </physiologicalReaction>
</comment>
<comment type="cofactor">
    <cofactor evidence="1">
        <name>[4Fe-4S] cluster</name>
        <dbReference type="ChEBI" id="CHEBI:49883"/>
    </cofactor>
    <text evidence="1">Binds 1 [4Fe-4S] cluster per subunit.</text>
</comment>
<comment type="pathway">
    <text evidence="1">Cofactor biosynthesis; NAD(+) biosynthesis; quinolinate from iminoaspartate: step 1/1.</text>
</comment>
<comment type="subcellular location">
    <subcellularLocation>
        <location evidence="1">Cytoplasm</location>
    </subcellularLocation>
</comment>
<comment type="similarity">
    <text evidence="1">Belongs to the quinolinate synthase family. Type 3 subfamily.</text>
</comment>
<sequence>MSILEKVQPIETMLPERYHKMSKEDMEKRVHEIKEKMGKMLFIPGHHYQKDEVVQFSDAAGDSLQLAQVAASNKDAKYIVFCGVHFMAETADMLTTDDQIVILPDMRAGCSMADMADIEQTERAWKELTKLFGDTMIPLTYVNSTAAIKAFCGRNGGATVTSSNAKQMVSWAFTQKERLVFLPDQHLGRNTAYDLGIPLDKMAVWDPHTDSLEYDGDIEEIQVILWKGHCSVHQNFTVKNIENVRKNHPDMNIIVHPECCYEVVAASDYAGSTKYIIDMIESAPSGSKWAIGTEMNLVNRIIQQHPDKEIVSLNPFMCPCLTMNRIDLPHLLWALETIERGEEINVISVDKQVTAEAVLALNRMLERV</sequence>
<feature type="chain" id="PRO_1000129452" description="Quinolinate synthase">
    <location>
        <begin position="1"/>
        <end position="368"/>
    </location>
</feature>
<feature type="binding site" evidence="1">
    <location>
        <position position="46"/>
    </location>
    <ligand>
        <name>iminosuccinate</name>
        <dbReference type="ChEBI" id="CHEBI:77875"/>
    </ligand>
</feature>
<feature type="binding site" evidence="1">
    <location>
        <position position="63"/>
    </location>
    <ligand>
        <name>iminosuccinate</name>
        <dbReference type="ChEBI" id="CHEBI:77875"/>
    </ligand>
</feature>
<feature type="binding site" evidence="1">
    <location>
        <position position="110"/>
    </location>
    <ligand>
        <name>[4Fe-4S] cluster</name>
        <dbReference type="ChEBI" id="CHEBI:49883"/>
    </ligand>
</feature>
<feature type="binding site" evidence="1">
    <location>
        <begin position="141"/>
        <end position="143"/>
    </location>
    <ligand>
        <name>iminosuccinate</name>
        <dbReference type="ChEBI" id="CHEBI:77875"/>
    </ligand>
</feature>
<feature type="binding site" evidence="1">
    <location>
        <position position="162"/>
    </location>
    <ligand>
        <name>iminosuccinate</name>
        <dbReference type="ChEBI" id="CHEBI:77875"/>
    </ligand>
</feature>
<feature type="binding site" evidence="1">
    <location>
        <position position="230"/>
    </location>
    <ligand>
        <name>[4Fe-4S] cluster</name>
        <dbReference type="ChEBI" id="CHEBI:49883"/>
    </ligand>
</feature>
<feature type="binding site" evidence="1">
    <location>
        <begin position="256"/>
        <end position="258"/>
    </location>
    <ligand>
        <name>iminosuccinate</name>
        <dbReference type="ChEBI" id="CHEBI:77875"/>
    </ligand>
</feature>
<feature type="binding site" evidence="1">
    <location>
        <position position="273"/>
    </location>
    <ligand>
        <name>iminosuccinate</name>
        <dbReference type="ChEBI" id="CHEBI:77875"/>
    </ligand>
</feature>
<feature type="binding site" evidence="1">
    <location>
        <position position="320"/>
    </location>
    <ligand>
        <name>[4Fe-4S] cluster</name>
        <dbReference type="ChEBI" id="CHEBI:49883"/>
    </ligand>
</feature>
<name>NADA_BACC2</name>
<proteinExistence type="inferred from homology"/>
<organism>
    <name type="scientific">Bacillus cereus (strain G9842)</name>
    <dbReference type="NCBI Taxonomy" id="405531"/>
    <lineage>
        <taxon>Bacteria</taxon>
        <taxon>Bacillati</taxon>
        <taxon>Bacillota</taxon>
        <taxon>Bacilli</taxon>
        <taxon>Bacillales</taxon>
        <taxon>Bacillaceae</taxon>
        <taxon>Bacillus</taxon>
        <taxon>Bacillus cereus group</taxon>
    </lineage>
</organism>
<reference key="1">
    <citation type="submission" date="2008-10" db="EMBL/GenBank/DDBJ databases">
        <title>Genome sequence of Bacillus cereus G9842.</title>
        <authorList>
            <person name="Dodson R.J."/>
            <person name="Durkin A.S."/>
            <person name="Rosovitz M.J."/>
            <person name="Rasko D.A."/>
            <person name="Hoffmaster A."/>
            <person name="Ravel J."/>
            <person name="Sutton G."/>
        </authorList>
    </citation>
    <scope>NUCLEOTIDE SEQUENCE [LARGE SCALE GENOMIC DNA]</scope>
    <source>
        <strain>G9842</strain>
    </source>
</reference>
<keyword id="KW-0004">4Fe-4S</keyword>
<keyword id="KW-0963">Cytoplasm</keyword>
<keyword id="KW-0408">Iron</keyword>
<keyword id="KW-0411">Iron-sulfur</keyword>
<keyword id="KW-0479">Metal-binding</keyword>
<keyword id="KW-0662">Pyridine nucleotide biosynthesis</keyword>
<keyword id="KW-0808">Transferase</keyword>
<protein>
    <recommendedName>
        <fullName evidence="1">Quinolinate synthase</fullName>
        <ecNumber evidence="1">2.5.1.72</ecNumber>
    </recommendedName>
</protein>
<dbReference type="EC" id="2.5.1.72" evidence="1"/>
<dbReference type="EMBL" id="CP001186">
    <property type="protein sequence ID" value="ACK94232.1"/>
    <property type="molecule type" value="Genomic_DNA"/>
</dbReference>
<dbReference type="RefSeq" id="WP_000025283.1">
    <property type="nucleotide sequence ID" value="NC_011772.1"/>
</dbReference>
<dbReference type="SMR" id="B7IIT9"/>
<dbReference type="KEGG" id="bcg:BCG9842_B0689"/>
<dbReference type="HOGENOM" id="CLU_047382_2_0_9"/>
<dbReference type="UniPathway" id="UPA00253">
    <property type="reaction ID" value="UER00327"/>
</dbReference>
<dbReference type="Proteomes" id="UP000006744">
    <property type="component" value="Chromosome"/>
</dbReference>
<dbReference type="GO" id="GO:0005829">
    <property type="term" value="C:cytosol"/>
    <property type="evidence" value="ECO:0007669"/>
    <property type="project" value="TreeGrafter"/>
</dbReference>
<dbReference type="GO" id="GO:0051539">
    <property type="term" value="F:4 iron, 4 sulfur cluster binding"/>
    <property type="evidence" value="ECO:0007669"/>
    <property type="project" value="UniProtKB-KW"/>
</dbReference>
<dbReference type="GO" id="GO:0046872">
    <property type="term" value="F:metal ion binding"/>
    <property type="evidence" value="ECO:0007669"/>
    <property type="project" value="UniProtKB-KW"/>
</dbReference>
<dbReference type="GO" id="GO:0008987">
    <property type="term" value="F:quinolinate synthetase A activity"/>
    <property type="evidence" value="ECO:0007669"/>
    <property type="project" value="UniProtKB-UniRule"/>
</dbReference>
<dbReference type="GO" id="GO:0034628">
    <property type="term" value="P:'de novo' NAD biosynthetic process from L-aspartate"/>
    <property type="evidence" value="ECO:0007669"/>
    <property type="project" value="TreeGrafter"/>
</dbReference>
<dbReference type="FunFam" id="3.40.50.10800:FF:000001">
    <property type="entry name" value="Quinolinate synthase A"/>
    <property type="match status" value="1"/>
</dbReference>
<dbReference type="Gene3D" id="3.40.50.10800">
    <property type="entry name" value="NadA-like"/>
    <property type="match status" value="3"/>
</dbReference>
<dbReference type="HAMAP" id="MF_00569">
    <property type="entry name" value="NadA_type3"/>
    <property type="match status" value="1"/>
</dbReference>
<dbReference type="InterPro" id="IPR003473">
    <property type="entry name" value="NadA"/>
</dbReference>
<dbReference type="InterPro" id="IPR036094">
    <property type="entry name" value="NadA_sf"/>
</dbReference>
<dbReference type="InterPro" id="IPR023515">
    <property type="entry name" value="Quinolinate_synth_A_type3"/>
</dbReference>
<dbReference type="NCBIfam" id="TIGR00550">
    <property type="entry name" value="nadA"/>
    <property type="match status" value="1"/>
</dbReference>
<dbReference type="NCBIfam" id="NF006880">
    <property type="entry name" value="PRK09375.2-1"/>
    <property type="match status" value="1"/>
</dbReference>
<dbReference type="NCBIfam" id="NF006883">
    <property type="entry name" value="PRK09375.2-4"/>
    <property type="match status" value="1"/>
</dbReference>
<dbReference type="PANTHER" id="PTHR30573:SF0">
    <property type="entry name" value="QUINOLINATE SYNTHASE, CHLOROPLASTIC"/>
    <property type="match status" value="1"/>
</dbReference>
<dbReference type="PANTHER" id="PTHR30573">
    <property type="entry name" value="QUINOLINATE SYNTHETASE A"/>
    <property type="match status" value="1"/>
</dbReference>
<dbReference type="Pfam" id="PF02445">
    <property type="entry name" value="NadA"/>
    <property type="match status" value="1"/>
</dbReference>
<dbReference type="SUPFAM" id="SSF142754">
    <property type="entry name" value="NadA-like"/>
    <property type="match status" value="1"/>
</dbReference>